<comment type="function">
    <text evidence="1">Catalyzes the interconversion of 2-phosphoglycerate and 3-phosphoglycerate.</text>
</comment>
<comment type="catalytic activity">
    <reaction evidence="1">
        <text>(2R)-2-phosphoglycerate = (2R)-3-phosphoglycerate</text>
        <dbReference type="Rhea" id="RHEA:15901"/>
        <dbReference type="ChEBI" id="CHEBI:58272"/>
        <dbReference type="ChEBI" id="CHEBI:58289"/>
        <dbReference type="EC" id="5.4.2.11"/>
    </reaction>
</comment>
<comment type="pathway">
    <text evidence="1">Carbohydrate degradation; glycolysis; pyruvate from D-glyceraldehyde 3-phosphate: step 3/5.</text>
</comment>
<comment type="similarity">
    <text evidence="1">Belongs to the phosphoglycerate mutase family. BPG-dependent PGAM subfamily.</text>
</comment>
<evidence type="ECO:0000255" key="1">
    <source>
        <dbReference type="HAMAP-Rule" id="MF_01039"/>
    </source>
</evidence>
<protein>
    <recommendedName>
        <fullName evidence="1">2,3-bisphosphoglycerate-dependent phosphoglycerate mutase</fullName>
        <shortName evidence="1">BPG-dependent PGAM</shortName>
        <shortName evidence="1">PGAM</shortName>
        <shortName evidence="1">Phosphoglyceromutase</shortName>
        <shortName evidence="1">dPGM</shortName>
        <ecNumber evidence="1">5.4.2.11</ecNumber>
    </recommendedName>
</protein>
<proteinExistence type="inferred from homology"/>
<accession>P0DD06</accession>
<accession>P65710</accession>
<accession>Q8P0C1</accession>
<organism>
    <name type="scientific">Streptococcus pyogenes serotype M3 (strain ATCC BAA-595 / MGAS315)</name>
    <dbReference type="NCBI Taxonomy" id="198466"/>
    <lineage>
        <taxon>Bacteria</taxon>
        <taxon>Bacillati</taxon>
        <taxon>Bacillota</taxon>
        <taxon>Bacilli</taxon>
        <taxon>Lactobacillales</taxon>
        <taxon>Streptococcaceae</taxon>
        <taxon>Streptococcus</taxon>
    </lineage>
</organism>
<sequence length="231" mass="26036">MVKLVFARHGESEWNKANLFTGWADVDLSEKGTQQAIDAGKLIKEAGIEFDLAFTSVLTRAIKTTNLALENAGQLWVPTEKSWRLNERHYGALTGKNKAEAAEQFGDEQVHIWRRSYDVLPPAMAKDDEYSAHKDRRYADLDPALIPDAENLKVTLERAMPYWEEKIAPALLDGKNVFVGAHGNSIRALVKHIKGLSDDEIMDVEIPNFPPLVFELDEKLNIVKEYYLGGE</sequence>
<feature type="chain" id="PRO_0000179928" description="2,3-bisphosphoglycerate-dependent phosphoglycerate mutase">
    <location>
        <begin position="1"/>
        <end position="231"/>
    </location>
</feature>
<feature type="active site" description="Tele-phosphohistidine intermediate" evidence="1">
    <location>
        <position position="9"/>
    </location>
</feature>
<feature type="active site" description="Proton donor/acceptor" evidence="1">
    <location>
        <position position="87"/>
    </location>
</feature>
<feature type="binding site" evidence="1">
    <location>
        <begin position="8"/>
        <end position="15"/>
    </location>
    <ligand>
        <name>substrate</name>
    </ligand>
</feature>
<feature type="binding site" evidence="1">
    <location>
        <begin position="21"/>
        <end position="22"/>
    </location>
    <ligand>
        <name>substrate</name>
    </ligand>
</feature>
<feature type="binding site" evidence="1">
    <location>
        <position position="60"/>
    </location>
    <ligand>
        <name>substrate</name>
    </ligand>
</feature>
<feature type="binding site" evidence="1">
    <location>
        <begin position="87"/>
        <end position="90"/>
    </location>
    <ligand>
        <name>substrate</name>
    </ligand>
</feature>
<feature type="binding site" evidence="1">
    <location>
        <position position="98"/>
    </location>
    <ligand>
        <name>substrate</name>
    </ligand>
</feature>
<feature type="binding site" evidence="1">
    <location>
        <begin position="114"/>
        <end position="115"/>
    </location>
    <ligand>
        <name>substrate</name>
    </ligand>
</feature>
<feature type="binding site" evidence="1">
    <location>
        <begin position="183"/>
        <end position="184"/>
    </location>
    <ligand>
        <name>substrate</name>
    </ligand>
</feature>
<feature type="site" description="Transition state stabilizer" evidence="1">
    <location>
        <position position="182"/>
    </location>
</feature>
<gene>
    <name evidence="1" type="primary">gpmA</name>
    <name type="ordered locus">SpyM3_1090</name>
</gene>
<dbReference type="EC" id="5.4.2.11" evidence="1"/>
<dbReference type="EMBL" id="AE014074">
    <property type="protein sequence ID" value="AAM79697.1"/>
    <property type="molecule type" value="Genomic_DNA"/>
</dbReference>
<dbReference type="RefSeq" id="WP_002983928.1">
    <property type="nucleotide sequence ID" value="NC_004070.1"/>
</dbReference>
<dbReference type="SMR" id="P0DD06"/>
<dbReference type="KEGG" id="spg:SpyM3_1090"/>
<dbReference type="HOGENOM" id="CLU_033323_1_5_9"/>
<dbReference type="UniPathway" id="UPA00109">
    <property type="reaction ID" value="UER00186"/>
</dbReference>
<dbReference type="Proteomes" id="UP000000564">
    <property type="component" value="Chromosome"/>
</dbReference>
<dbReference type="GO" id="GO:0004619">
    <property type="term" value="F:phosphoglycerate mutase activity"/>
    <property type="evidence" value="ECO:0007669"/>
    <property type="project" value="UniProtKB-EC"/>
</dbReference>
<dbReference type="GO" id="GO:0006094">
    <property type="term" value="P:gluconeogenesis"/>
    <property type="evidence" value="ECO:0007669"/>
    <property type="project" value="UniProtKB-UniRule"/>
</dbReference>
<dbReference type="GO" id="GO:0006096">
    <property type="term" value="P:glycolytic process"/>
    <property type="evidence" value="ECO:0007669"/>
    <property type="project" value="UniProtKB-UniRule"/>
</dbReference>
<dbReference type="CDD" id="cd07067">
    <property type="entry name" value="HP_PGM_like"/>
    <property type="match status" value="1"/>
</dbReference>
<dbReference type="FunFam" id="3.40.50.1240:FF:000003">
    <property type="entry name" value="2,3-bisphosphoglycerate-dependent phosphoglycerate mutase"/>
    <property type="match status" value="1"/>
</dbReference>
<dbReference type="Gene3D" id="3.40.50.1240">
    <property type="entry name" value="Phosphoglycerate mutase-like"/>
    <property type="match status" value="1"/>
</dbReference>
<dbReference type="HAMAP" id="MF_01039">
    <property type="entry name" value="PGAM_GpmA"/>
    <property type="match status" value="1"/>
</dbReference>
<dbReference type="InterPro" id="IPR013078">
    <property type="entry name" value="His_Pase_superF_clade-1"/>
</dbReference>
<dbReference type="InterPro" id="IPR029033">
    <property type="entry name" value="His_PPase_superfam"/>
</dbReference>
<dbReference type="InterPro" id="IPR005952">
    <property type="entry name" value="Phosphogly_mut1"/>
</dbReference>
<dbReference type="NCBIfam" id="TIGR01258">
    <property type="entry name" value="pgm_1"/>
    <property type="match status" value="1"/>
</dbReference>
<dbReference type="NCBIfam" id="NF010713">
    <property type="entry name" value="PRK14115.1"/>
    <property type="match status" value="1"/>
</dbReference>
<dbReference type="NCBIfam" id="NF010715">
    <property type="entry name" value="PRK14117.1"/>
    <property type="match status" value="1"/>
</dbReference>
<dbReference type="PANTHER" id="PTHR11931">
    <property type="entry name" value="PHOSPHOGLYCERATE MUTASE"/>
    <property type="match status" value="1"/>
</dbReference>
<dbReference type="Pfam" id="PF00300">
    <property type="entry name" value="His_Phos_1"/>
    <property type="match status" value="1"/>
</dbReference>
<dbReference type="PIRSF" id="PIRSF000709">
    <property type="entry name" value="6PFK_2-Ptase"/>
    <property type="match status" value="1"/>
</dbReference>
<dbReference type="SMART" id="SM00855">
    <property type="entry name" value="PGAM"/>
    <property type="match status" value="1"/>
</dbReference>
<dbReference type="SUPFAM" id="SSF53254">
    <property type="entry name" value="Phosphoglycerate mutase-like"/>
    <property type="match status" value="1"/>
</dbReference>
<keyword id="KW-0312">Gluconeogenesis</keyword>
<keyword id="KW-0324">Glycolysis</keyword>
<keyword id="KW-0413">Isomerase</keyword>
<reference key="1">
    <citation type="journal article" date="2002" name="Proc. Natl. Acad. Sci. U.S.A.">
        <title>Genome sequence of a serotype M3 strain of group A Streptococcus: phage-encoded toxins, the high-virulence phenotype, and clone emergence.</title>
        <authorList>
            <person name="Beres S.B."/>
            <person name="Sylva G.L."/>
            <person name="Barbian K.D."/>
            <person name="Lei B."/>
            <person name="Hoff J.S."/>
            <person name="Mammarella N.D."/>
            <person name="Liu M.-Y."/>
            <person name="Smoot J.C."/>
            <person name="Porcella S.F."/>
            <person name="Parkins L.D."/>
            <person name="Campbell D.S."/>
            <person name="Smith T.M."/>
            <person name="McCormick J.K."/>
            <person name="Leung D.Y.M."/>
            <person name="Schlievert P.M."/>
            <person name="Musser J.M."/>
        </authorList>
    </citation>
    <scope>NUCLEOTIDE SEQUENCE [LARGE SCALE GENOMIC DNA]</scope>
    <source>
        <strain>ATCC BAA-595 / MGAS315</strain>
    </source>
</reference>
<name>GPMA_STRP3</name>